<evidence type="ECO:0000255" key="1">
    <source>
        <dbReference type="HAMAP-Rule" id="MF_00268"/>
    </source>
</evidence>
<feature type="chain" id="PRO_1000193297" description="Protein RecA">
    <location>
        <begin position="1"/>
        <end position="356"/>
    </location>
</feature>
<feature type="binding site" evidence="1">
    <location>
        <begin position="77"/>
        <end position="84"/>
    </location>
    <ligand>
        <name>ATP</name>
        <dbReference type="ChEBI" id="CHEBI:30616"/>
    </ligand>
</feature>
<comment type="function">
    <text evidence="1">Can catalyze the hydrolysis of ATP in the presence of single-stranded DNA, the ATP-dependent uptake of single-stranded DNA by duplex DNA, and the ATP-dependent hybridization of homologous single-stranded DNAs. It interacts with LexA causing its activation and leading to its autocatalytic cleavage.</text>
</comment>
<comment type="subcellular location">
    <subcellularLocation>
        <location evidence="1">Cytoplasm</location>
    </subcellularLocation>
</comment>
<comment type="similarity">
    <text evidence="1">Belongs to the RecA family.</text>
</comment>
<name>RECA_CAUVN</name>
<gene>
    <name evidence="1" type="primary">recA</name>
    <name type="ordered locus">CCNA_01141</name>
</gene>
<sequence>MTSQAALKLVAKEEGDKQRALEAALAQIDRAFGKGSVMKLGEKGKVEIESVSTGSLGLDIALGIGGLPKGRIVEVYGPESSGKTTLALHVVAEVQKAGGTAAFVDAEHALDPSYAYKLGVNLDNLLVSQPDNGEQALEITDTLVRSGAVDIVVVDSVAALTPKAEIEGEMGDSLPGLQARLMSQALRKLTASINKANTIVIFINQIRHKIGVMYGSPETTTGGNALKFYASVRLDIRRTGSVKARDEIVGNNVRVKVVKNKVAPPFREVEFDIMYGEGISKLGEVIDLGVKAGIIDKAGSWFSYGSQRIGQGRDNVREFLKNNPDVAADIEKAVRKSSQKIEEELLVGGPEEGEED</sequence>
<organism>
    <name type="scientific">Caulobacter vibrioides (strain NA1000 / CB15N)</name>
    <name type="common">Caulobacter crescentus</name>
    <dbReference type="NCBI Taxonomy" id="565050"/>
    <lineage>
        <taxon>Bacteria</taxon>
        <taxon>Pseudomonadati</taxon>
        <taxon>Pseudomonadota</taxon>
        <taxon>Alphaproteobacteria</taxon>
        <taxon>Caulobacterales</taxon>
        <taxon>Caulobacteraceae</taxon>
        <taxon>Caulobacter</taxon>
    </lineage>
</organism>
<proteinExistence type="inferred from homology"/>
<reference key="1">
    <citation type="journal article" date="2010" name="J. Bacteriol.">
        <title>The genetic basis of laboratory adaptation in Caulobacter crescentus.</title>
        <authorList>
            <person name="Marks M.E."/>
            <person name="Castro-Rojas C.M."/>
            <person name="Teiling C."/>
            <person name="Du L."/>
            <person name="Kapatral V."/>
            <person name="Walunas T.L."/>
            <person name="Crosson S."/>
        </authorList>
    </citation>
    <scope>NUCLEOTIDE SEQUENCE [LARGE SCALE GENOMIC DNA]</scope>
    <source>
        <strain>NA1000 / CB15N</strain>
    </source>
</reference>
<dbReference type="EMBL" id="CP001340">
    <property type="protein sequence ID" value="ACL94606.1"/>
    <property type="molecule type" value="Genomic_DNA"/>
</dbReference>
<dbReference type="RefSeq" id="WP_010918971.1">
    <property type="nucleotide sequence ID" value="NC_011916.1"/>
</dbReference>
<dbReference type="RefSeq" id="YP_002516514.1">
    <property type="nucleotide sequence ID" value="NC_011916.1"/>
</dbReference>
<dbReference type="SMR" id="B8H3I7"/>
<dbReference type="GeneID" id="7331512"/>
<dbReference type="KEGG" id="ccs:CCNA_01141"/>
<dbReference type="PATRIC" id="fig|565050.3.peg.1123"/>
<dbReference type="HOGENOM" id="CLU_040469_3_2_5"/>
<dbReference type="OrthoDB" id="9776733at2"/>
<dbReference type="PhylomeDB" id="B8H3I7"/>
<dbReference type="Proteomes" id="UP000001364">
    <property type="component" value="Chromosome"/>
</dbReference>
<dbReference type="GO" id="GO:0005829">
    <property type="term" value="C:cytosol"/>
    <property type="evidence" value="ECO:0007669"/>
    <property type="project" value="TreeGrafter"/>
</dbReference>
<dbReference type="GO" id="GO:0005524">
    <property type="term" value="F:ATP binding"/>
    <property type="evidence" value="ECO:0007669"/>
    <property type="project" value="UniProtKB-UniRule"/>
</dbReference>
<dbReference type="GO" id="GO:0016887">
    <property type="term" value="F:ATP hydrolysis activity"/>
    <property type="evidence" value="ECO:0007669"/>
    <property type="project" value="InterPro"/>
</dbReference>
<dbReference type="GO" id="GO:0140664">
    <property type="term" value="F:ATP-dependent DNA damage sensor activity"/>
    <property type="evidence" value="ECO:0007669"/>
    <property type="project" value="InterPro"/>
</dbReference>
<dbReference type="GO" id="GO:0003684">
    <property type="term" value="F:damaged DNA binding"/>
    <property type="evidence" value="ECO:0007669"/>
    <property type="project" value="UniProtKB-UniRule"/>
</dbReference>
<dbReference type="GO" id="GO:0003697">
    <property type="term" value="F:single-stranded DNA binding"/>
    <property type="evidence" value="ECO:0007669"/>
    <property type="project" value="UniProtKB-UniRule"/>
</dbReference>
<dbReference type="GO" id="GO:0006310">
    <property type="term" value="P:DNA recombination"/>
    <property type="evidence" value="ECO:0007669"/>
    <property type="project" value="UniProtKB-UniRule"/>
</dbReference>
<dbReference type="GO" id="GO:0006281">
    <property type="term" value="P:DNA repair"/>
    <property type="evidence" value="ECO:0007669"/>
    <property type="project" value="UniProtKB-UniRule"/>
</dbReference>
<dbReference type="GO" id="GO:0009432">
    <property type="term" value="P:SOS response"/>
    <property type="evidence" value="ECO:0007669"/>
    <property type="project" value="UniProtKB-UniRule"/>
</dbReference>
<dbReference type="CDD" id="cd00983">
    <property type="entry name" value="RecA"/>
    <property type="match status" value="1"/>
</dbReference>
<dbReference type="FunFam" id="3.40.50.300:FF:000087">
    <property type="entry name" value="Recombinase RecA"/>
    <property type="match status" value="1"/>
</dbReference>
<dbReference type="Gene3D" id="3.40.50.300">
    <property type="entry name" value="P-loop containing nucleotide triphosphate hydrolases"/>
    <property type="match status" value="1"/>
</dbReference>
<dbReference type="HAMAP" id="MF_00268">
    <property type="entry name" value="RecA"/>
    <property type="match status" value="1"/>
</dbReference>
<dbReference type="InterPro" id="IPR003593">
    <property type="entry name" value="AAA+_ATPase"/>
</dbReference>
<dbReference type="InterPro" id="IPR013765">
    <property type="entry name" value="DNA_recomb/repair_RecA"/>
</dbReference>
<dbReference type="InterPro" id="IPR020584">
    <property type="entry name" value="DNA_recomb/repair_RecA_CS"/>
</dbReference>
<dbReference type="InterPro" id="IPR027417">
    <property type="entry name" value="P-loop_NTPase"/>
</dbReference>
<dbReference type="InterPro" id="IPR049261">
    <property type="entry name" value="RecA-like_C"/>
</dbReference>
<dbReference type="InterPro" id="IPR049428">
    <property type="entry name" value="RecA-like_N"/>
</dbReference>
<dbReference type="InterPro" id="IPR020588">
    <property type="entry name" value="RecA_ATP-bd"/>
</dbReference>
<dbReference type="InterPro" id="IPR023400">
    <property type="entry name" value="RecA_C_sf"/>
</dbReference>
<dbReference type="InterPro" id="IPR020587">
    <property type="entry name" value="RecA_monomer-monomer_interface"/>
</dbReference>
<dbReference type="NCBIfam" id="TIGR02012">
    <property type="entry name" value="tigrfam_recA"/>
    <property type="match status" value="1"/>
</dbReference>
<dbReference type="PANTHER" id="PTHR45900:SF1">
    <property type="entry name" value="MITOCHONDRIAL DNA REPAIR PROTEIN RECA HOMOLOG-RELATED"/>
    <property type="match status" value="1"/>
</dbReference>
<dbReference type="PANTHER" id="PTHR45900">
    <property type="entry name" value="RECA"/>
    <property type="match status" value="1"/>
</dbReference>
<dbReference type="Pfam" id="PF00154">
    <property type="entry name" value="RecA"/>
    <property type="match status" value="1"/>
</dbReference>
<dbReference type="Pfam" id="PF21096">
    <property type="entry name" value="RecA_C"/>
    <property type="match status" value="1"/>
</dbReference>
<dbReference type="PRINTS" id="PR00142">
    <property type="entry name" value="RECA"/>
</dbReference>
<dbReference type="SMART" id="SM00382">
    <property type="entry name" value="AAA"/>
    <property type="match status" value="1"/>
</dbReference>
<dbReference type="SUPFAM" id="SSF52540">
    <property type="entry name" value="P-loop containing nucleoside triphosphate hydrolases"/>
    <property type="match status" value="1"/>
</dbReference>
<dbReference type="SUPFAM" id="SSF54752">
    <property type="entry name" value="RecA protein, C-terminal domain"/>
    <property type="match status" value="1"/>
</dbReference>
<dbReference type="PROSITE" id="PS00321">
    <property type="entry name" value="RECA_1"/>
    <property type="match status" value="1"/>
</dbReference>
<dbReference type="PROSITE" id="PS50162">
    <property type="entry name" value="RECA_2"/>
    <property type="match status" value="1"/>
</dbReference>
<dbReference type="PROSITE" id="PS50163">
    <property type="entry name" value="RECA_3"/>
    <property type="match status" value="1"/>
</dbReference>
<keyword id="KW-0067">ATP-binding</keyword>
<keyword id="KW-0963">Cytoplasm</keyword>
<keyword id="KW-0227">DNA damage</keyword>
<keyword id="KW-0233">DNA recombination</keyword>
<keyword id="KW-0234">DNA repair</keyword>
<keyword id="KW-0238">DNA-binding</keyword>
<keyword id="KW-0547">Nucleotide-binding</keyword>
<keyword id="KW-1185">Reference proteome</keyword>
<keyword id="KW-0742">SOS response</keyword>
<accession>B8H3I7</accession>
<protein>
    <recommendedName>
        <fullName evidence="1">Protein RecA</fullName>
    </recommendedName>
    <alternativeName>
        <fullName evidence="1">Recombinase A</fullName>
    </alternativeName>
</protein>